<reference key="1">
    <citation type="journal article" date="2004" name="Plant J.">
        <title>DVL, a novel class of small polypeptides: overexpression alters Arabidopsis development.</title>
        <authorList>
            <person name="Wen J."/>
            <person name="Lease K.A."/>
            <person name="Walker J.C."/>
        </authorList>
    </citation>
    <scope>NUCLEOTIDE SEQUENCE [MRNA]</scope>
    <scope>GENE FAMILY</scope>
    <scope>NOMENCLATURE</scope>
    <source>
        <strain>cv. Columbia</strain>
    </source>
</reference>
<reference key="2">
    <citation type="journal article" date="1999" name="Nature">
        <title>Sequence and analysis of chromosome 2 of the plant Arabidopsis thaliana.</title>
        <authorList>
            <person name="Lin X."/>
            <person name="Kaul S."/>
            <person name="Rounsley S.D."/>
            <person name="Shea T.P."/>
            <person name="Benito M.-I."/>
            <person name="Town C.D."/>
            <person name="Fujii C.Y."/>
            <person name="Mason T.M."/>
            <person name="Bowman C.L."/>
            <person name="Barnstead M.E."/>
            <person name="Feldblyum T.V."/>
            <person name="Buell C.R."/>
            <person name="Ketchum K.A."/>
            <person name="Lee J.J."/>
            <person name="Ronning C.M."/>
            <person name="Koo H.L."/>
            <person name="Moffat K.S."/>
            <person name="Cronin L.A."/>
            <person name="Shen M."/>
            <person name="Pai G."/>
            <person name="Van Aken S."/>
            <person name="Umayam L."/>
            <person name="Tallon L.J."/>
            <person name="Gill J.E."/>
            <person name="Adams M.D."/>
            <person name="Carrera A.J."/>
            <person name="Creasy T.H."/>
            <person name="Goodman H.M."/>
            <person name="Somerville C.R."/>
            <person name="Copenhaver G.P."/>
            <person name="Preuss D."/>
            <person name="Nierman W.C."/>
            <person name="White O."/>
            <person name="Eisen J.A."/>
            <person name="Salzberg S.L."/>
            <person name="Fraser C.M."/>
            <person name="Venter J.C."/>
        </authorList>
    </citation>
    <scope>NUCLEOTIDE SEQUENCE [LARGE SCALE GENOMIC DNA]</scope>
    <source>
        <strain>cv. Columbia</strain>
    </source>
</reference>
<reference key="3">
    <citation type="journal article" date="2017" name="Plant J.">
        <title>Araport11: a complete reannotation of the Arabidopsis thaliana reference genome.</title>
        <authorList>
            <person name="Cheng C.Y."/>
            <person name="Krishnakumar V."/>
            <person name="Chan A.P."/>
            <person name="Thibaud-Nissen F."/>
            <person name="Schobel S."/>
            <person name="Town C.D."/>
        </authorList>
    </citation>
    <scope>GENOME REANNOTATION</scope>
    <source>
        <strain>cv. Columbia</strain>
    </source>
</reference>
<reference key="4">
    <citation type="journal article" date="2003" name="Science">
        <title>Empirical analysis of transcriptional activity in the Arabidopsis genome.</title>
        <authorList>
            <person name="Yamada K."/>
            <person name="Lim J."/>
            <person name="Dale J.M."/>
            <person name="Chen H."/>
            <person name="Shinn P."/>
            <person name="Palm C.J."/>
            <person name="Southwick A.M."/>
            <person name="Wu H.C."/>
            <person name="Kim C.J."/>
            <person name="Nguyen M."/>
            <person name="Pham P.K."/>
            <person name="Cheuk R.F."/>
            <person name="Karlin-Newmann G."/>
            <person name="Liu S.X."/>
            <person name="Lam B."/>
            <person name="Sakano H."/>
            <person name="Wu T."/>
            <person name="Yu G."/>
            <person name="Miranda M."/>
            <person name="Quach H.L."/>
            <person name="Tripp M."/>
            <person name="Chang C.H."/>
            <person name="Lee J.M."/>
            <person name="Toriumi M.J."/>
            <person name="Chan M.M."/>
            <person name="Tang C.C."/>
            <person name="Onodera C.S."/>
            <person name="Deng J.M."/>
            <person name="Akiyama K."/>
            <person name="Ansari Y."/>
            <person name="Arakawa T."/>
            <person name="Banh J."/>
            <person name="Banno F."/>
            <person name="Bowser L."/>
            <person name="Brooks S.Y."/>
            <person name="Carninci P."/>
            <person name="Chao Q."/>
            <person name="Choy N."/>
            <person name="Enju A."/>
            <person name="Goldsmith A.D."/>
            <person name="Gurjal M."/>
            <person name="Hansen N.F."/>
            <person name="Hayashizaki Y."/>
            <person name="Johnson-Hopson C."/>
            <person name="Hsuan V.W."/>
            <person name="Iida K."/>
            <person name="Karnes M."/>
            <person name="Khan S."/>
            <person name="Koesema E."/>
            <person name="Ishida J."/>
            <person name="Jiang P.X."/>
            <person name="Jones T."/>
            <person name="Kawai J."/>
            <person name="Kamiya A."/>
            <person name="Meyers C."/>
            <person name="Nakajima M."/>
            <person name="Narusaka M."/>
            <person name="Seki M."/>
            <person name="Sakurai T."/>
            <person name="Satou M."/>
            <person name="Tamse R."/>
            <person name="Vaysberg M."/>
            <person name="Wallender E.K."/>
            <person name="Wong C."/>
            <person name="Yamamura Y."/>
            <person name="Yuan S."/>
            <person name="Shinozaki K."/>
            <person name="Davis R.W."/>
            <person name="Theologis A."/>
            <person name="Ecker J.R."/>
        </authorList>
    </citation>
    <scope>NUCLEOTIDE SEQUENCE [LARGE SCALE MRNA]</scope>
    <source>
        <strain>cv. Columbia</strain>
    </source>
</reference>
<reference key="5">
    <citation type="journal article" date="2004" name="Plant J.">
        <title>Overexpression of a novel small peptide ROTUNDIFOLIA4 decreases cell proliferation and alters leaf shape in Arabidopsis thaliana.</title>
        <authorList>
            <person name="Narita N.N."/>
            <person name="Moore S."/>
            <person name="Horiguchi G."/>
            <person name="Kubo M."/>
            <person name="Demura T."/>
            <person name="Fukuda H."/>
            <person name="Goodrich J."/>
            <person name="Tsukaya H."/>
        </authorList>
    </citation>
    <scope>GENE FAMILY</scope>
    <source>
        <strain>cv. Columbia</strain>
        <strain>cv. Landsberg erecta</strain>
    </source>
</reference>
<reference key="6">
    <citation type="journal article" date="2015" name="J. Plant Res.">
        <title>Comparative analysis of the RTFL peptide family on the control of plant organogenesis.</title>
        <authorList>
            <person name="Guo P."/>
            <person name="Yoshimura A."/>
            <person name="Ishikawa N."/>
            <person name="Yamaguchi T."/>
            <person name="Guo Y."/>
            <person name="Tsukaya H."/>
        </authorList>
    </citation>
    <scope>REVIEW</scope>
    <scope>GENE FAMILY</scope>
    <scope>NOMENCLATURE</scope>
    <source>
        <strain>cv. Columbia</strain>
    </source>
</reference>
<dbReference type="EMBL" id="BK001756">
    <property type="protein sequence ID" value="DAA02284.1"/>
    <property type="molecule type" value="mRNA"/>
</dbReference>
<dbReference type="EMBL" id="AC005315">
    <property type="status" value="NOT_ANNOTATED_CDS"/>
    <property type="molecule type" value="Genomic_DNA"/>
</dbReference>
<dbReference type="EMBL" id="CP002685">
    <property type="protein sequence ID" value="AEC08214.1"/>
    <property type="molecule type" value="Genomic_DNA"/>
</dbReference>
<dbReference type="EMBL" id="AY136336">
    <property type="protein sequence ID" value="AAM97002.1"/>
    <property type="molecule type" value="mRNA"/>
</dbReference>
<dbReference type="EMBL" id="BT000101">
    <property type="protein sequence ID" value="AAN15420.1"/>
    <property type="molecule type" value="mRNA"/>
</dbReference>
<dbReference type="RefSeq" id="NP_850130.1">
    <property type="nucleotide sequence ID" value="NM_179799.2"/>
</dbReference>
<dbReference type="FunCoup" id="Q8L7D0">
    <property type="interactions" value="3"/>
</dbReference>
<dbReference type="IntAct" id="Q8L7D0">
    <property type="interactions" value="1"/>
</dbReference>
<dbReference type="STRING" id="3702.Q8L7D0"/>
<dbReference type="iPTMnet" id="Q8L7D0"/>
<dbReference type="PaxDb" id="3702-AT2G29125.1"/>
<dbReference type="ProteomicsDB" id="193314"/>
<dbReference type="EnsemblPlants" id="AT2G29125.1">
    <property type="protein sequence ID" value="AT2G29125.1"/>
    <property type="gene ID" value="AT2G29125"/>
</dbReference>
<dbReference type="GeneID" id="817461"/>
<dbReference type="Gramene" id="AT2G29125.1">
    <property type="protein sequence ID" value="AT2G29125.1"/>
    <property type="gene ID" value="AT2G29125"/>
</dbReference>
<dbReference type="KEGG" id="ath:AT2G29125"/>
<dbReference type="Araport" id="AT2G29125"/>
<dbReference type="TAIR" id="AT2G29125">
    <property type="gene designation" value="RTFL2"/>
</dbReference>
<dbReference type="eggNOG" id="ENOG502S3XH">
    <property type="taxonomic scope" value="Eukaryota"/>
</dbReference>
<dbReference type="HOGENOM" id="CLU_150897_0_0_1"/>
<dbReference type="InParanoid" id="Q8L7D0"/>
<dbReference type="OMA" id="SKCPLPR"/>
<dbReference type="OrthoDB" id="1613769at2759"/>
<dbReference type="PRO" id="PR:Q8L7D0"/>
<dbReference type="Proteomes" id="UP000006548">
    <property type="component" value="Chromosome 2"/>
</dbReference>
<dbReference type="ExpressionAtlas" id="Q8L7D0">
    <property type="expression patterns" value="baseline and differential"/>
</dbReference>
<dbReference type="GO" id="GO:0005886">
    <property type="term" value="C:plasma membrane"/>
    <property type="evidence" value="ECO:0000250"/>
    <property type="project" value="UniProtKB"/>
</dbReference>
<dbReference type="GO" id="GO:0008285">
    <property type="term" value="P:negative regulation of cell population proliferation"/>
    <property type="evidence" value="ECO:0000250"/>
    <property type="project" value="UniProtKB"/>
</dbReference>
<dbReference type="GO" id="GO:0048367">
    <property type="term" value="P:shoot system development"/>
    <property type="evidence" value="ECO:0000250"/>
    <property type="project" value="TAIR"/>
</dbReference>
<dbReference type="InterPro" id="IPR012552">
    <property type="entry name" value="DVL"/>
</dbReference>
<dbReference type="InterPro" id="IPR052692">
    <property type="entry name" value="DVL_RTFL_polypeptides"/>
</dbReference>
<dbReference type="PANTHER" id="PTHR47596">
    <property type="entry name" value="DVL13"/>
    <property type="match status" value="1"/>
</dbReference>
<dbReference type="PANTHER" id="PTHR47596:SF11">
    <property type="entry name" value="SMALL POLYPEPTIDE DEVIL 13"/>
    <property type="match status" value="1"/>
</dbReference>
<dbReference type="Pfam" id="PF08137">
    <property type="entry name" value="DVL"/>
    <property type="match status" value="1"/>
</dbReference>
<evidence type="ECO:0000250" key="1">
    <source>
        <dbReference type="UniProtKB" id="Q6X5V0"/>
    </source>
</evidence>
<evidence type="ECO:0000250" key="2">
    <source>
        <dbReference type="UniProtKB" id="Q7XXN8"/>
    </source>
</evidence>
<evidence type="ECO:0000255" key="3"/>
<evidence type="ECO:0000256" key="4">
    <source>
        <dbReference type="SAM" id="MobiDB-lite"/>
    </source>
</evidence>
<evidence type="ECO:0000303" key="5">
    <source>
    </source>
</evidence>
<evidence type="ECO:0000303" key="6">
    <source>
    </source>
</evidence>
<evidence type="ECO:0000305" key="7"/>
<evidence type="ECO:0000312" key="8">
    <source>
        <dbReference type="EMBL" id="AC005315"/>
    </source>
</evidence>
<evidence type="ECO:0000312" key="9">
    <source>
        <dbReference type="EMBL" id="AEC08214.1"/>
    </source>
</evidence>
<accession>Q8L7D0</accession>
<protein>
    <recommendedName>
        <fullName evidence="5">Small polypeptide DEVIL 13</fullName>
    </recommendedName>
    <alternativeName>
        <fullName evidence="6">Small polypeptide ROTUNDIFOLIA LIKE 2</fullName>
        <shortName evidence="6">Small polypeptide ROT-FOUR-LIKE 2</shortName>
    </alternativeName>
</protein>
<keyword id="KW-1003">Cell membrane</keyword>
<keyword id="KW-0217">Developmental protein</keyword>
<keyword id="KW-0472">Membrane</keyword>
<keyword id="KW-1185">Reference proteome</keyword>
<keyword id="KW-0812">Transmembrane</keyword>
<keyword id="KW-1133">Transmembrane helix</keyword>
<sequence length="115" mass="12651">MEEKWKLSKKDTTASSSSSKSKFSRSFSTSASSTKSPIFVRSSSTKCSVPSSSSSSSSSSSISRSFSRKERRSSSSSSSSITQKYSSLAKEQKARFYIMRRCVAMLVCWHKHGDS</sequence>
<organism>
    <name type="scientific">Arabidopsis thaliana</name>
    <name type="common">Mouse-ear cress</name>
    <dbReference type="NCBI Taxonomy" id="3702"/>
    <lineage>
        <taxon>Eukaryota</taxon>
        <taxon>Viridiplantae</taxon>
        <taxon>Streptophyta</taxon>
        <taxon>Embryophyta</taxon>
        <taxon>Tracheophyta</taxon>
        <taxon>Spermatophyta</taxon>
        <taxon>Magnoliopsida</taxon>
        <taxon>eudicotyledons</taxon>
        <taxon>Gunneridae</taxon>
        <taxon>Pentapetalae</taxon>
        <taxon>rosids</taxon>
        <taxon>malvids</taxon>
        <taxon>Brassicales</taxon>
        <taxon>Brassicaceae</taxon>
        <taxon>Camelineae</taxon>
        <taxon>Arabidopsis</taxon>
    </lineage>
</organism>
<feature type="chain" id="PRO_0000452781" description="Small polypeptide DEVIL 13">
    <location>
        <begin position="1"/>
        <end position="115"/>
    </location>
</feature>
<feature type="transmembrane region" description="Helical" evidence="3">
    <location>
        <begin position="44"/>
        <end position="63"/>
    </location>
</feature>
<feature type="region of interest" description="Disordered" evidence="4">
    <location>
        <begin position="1"/>
        <end position="89"/>
    </location>
</feature>
<feature type="region of interest" description="Required for DVL/RTFL small polypeptide activity" evidence="2">
    <location>
        <begin position="80"/>
        <end position="111"/>
    </location>
</feature>
<feature type="compositionally biased region" description="Basic and acidic residues" evidence="4">
    <location>
        <begin position="1"/>
        <end position="12"/>
    </location>
</feature>
<feature type="compositionally biased region" description="Low complexity" evidence="4">
    <location>
        <begin position="13"/>
        <end position="65"/>
    </location>
</feature>
<name>DVL13_ARATH</name>
<proteinExistence type="inferred from homology"/>
<gene>
    <name evidence="5" type="primary">DVL13</name>
    <name evidence="6" type="synonym">RTFL2</name>
    <name evidence="9" type="ordered locus">At2g29125</name>
    <name evidence="8" type="ORF">T9I4</name>
</gene>
<comment type="function">
    <text evidence="1">Small polypeptide acting as a regulatory molecule which coordinates cellular responses required for differentiation, growth and development, probably by restricting polar cell proliferation in lateral organs and coordinating socket cell recruitment and differentiation at trichome sites.</text>
</comment>
<comment type="subcellular location">
    <subcellularLocation>
        <location evidence="2">Cell membrane</location>
        <topology evidence="3">Single-pass membrane protein</topology>
    </subcellularLocation>
</comment>
<comment type="similarity">
    <text evidence="7">Belongs to the DVL/RTFL small polypeptides family.</text>
</comment>